<gene>
    <name type="primary">Slc46a3</name>
</gene>
<keyword id="KW-0325">Glycoprotein</keyword>
<keyword id="KW-0458">Lysosome</keyword>
<keyword id="KW-0472">Membrane</keyword>
<keyword id="KW-1185">Reference proteome</keyword>
<keyword id="KW-0732">Signal</keyword>
<keyword id="KW-0769">Symport</keyword>
<keyword id="KW-0812">Transmembrane</keyword>
<keyword id="KW-1133">Transmembrane helix</keyword>
<keyword id="KW-0813">Transport</keyword>
<evidence type="ECO:0000250" key="1">
    <source>
        <dbReference type="UniProtKB" id="Q7Z3Q1"/>
    </source>
</evidence>
<evidence type="ECO:0000250" key="2">
    <source>
        <dbReference type="UniProtKB" id="Q9DC26"/>
    </source>
</evidence>
<evidence type="ECO:0000255" key="3"/>
<evidence type="ECO:0000305" key="4"/>
<proteinExistence type="evidence at transcript level"/>
<name>S46A3_RAT</name>
<sequence length="461" mass="51527">MKISFIEPAILLYAFAMTLTIPLTAQYVYRRIWEETGNYTFTSSSNVSECEQNKSSSTFAFQEEVQKKASLFSLQVEISGLIPGLVSTFMLLSSSDNHGRKLPMVLSSLGSLGTNLWLCAMSYFDLPLQLLVASTFIGALFGNYTTFWGACFAYIVDQEKEYKHRIIRIAVLDFMLGVVTGLTGLSSGYFIRELGFAWSYFIIAVVVLVNLAYILFFLSDPIKESSSQIVTMSCSESLKDLFYRTYMLFKNGSCKRRSLLCLLIFTLVVYFFVVFGITPVFTLYELGPPLCWNEVYIGYGSALGSLSFLSSFLGIWLFSYCLKDIHIAYVGIFTTMVGMMLTAFTRTTLMMFLVRISFFFTIMPLSILRSMLSKVVHSTEQGVLFACIAFLETLGGVTSTSAYNGIYSATVAWYPGFVFLLSAGLLVLPAVSLCMVKCIGWEEGSYTLLIHDEPSEHTSDS</sequence>
<feature type="signal peptide" evidence="3">
    <location>
        <begin position="1"/>
        <end position="25"/>
    </location>
</feature>
<feature type="chain" id="PRO_0000307256" description="Lysosomal proton-coupled steroid conjugate and bile acid symporter SLC46A3">
    <location>
        <begin position="26"/>
        <end position="461"/>
    </location>
</feature>
<feature type="topological domain" description="Extracellular" evidence="3">
    <location>
        <begin position="26"/>
        <end position="70"/>
    </location>
</feature>
<feature type="transmembrane region" description="Helical" evidence="3">
    <location>
        <begin position="71"/>
        <end position="91"/>
    </location>
</feature>
<feature type="topological domain" description="Cytoplasmic" evidence="3">
    <location>
        <begin position="92"/>
        <end position="103"/>
    </location>
</feature>
<feature type="transmembrane region" description="Helical" evidence="3">
    <location>
        <begin position="104"/>
        <end position="124"/>
    </location>
</feature>
<feature type="topological domain" description="Extracellular" evidence="3">
    <location>
        <begin position="125"/>
        <end position="135"/>
    </location>
</feature>
<feature type="transmembrane region" description="Helical" evidence="3">
    <location>
        <begin position="136"/>
        <end position="156"/>
    </location>
</feature>
<feature type="topological domain" description="Cytoplasmic" evidence="3">
    <location>
        <begin position="157"/>
        <end position="170"/>
    </location>
</feature>
<feature type="transmembrane region" description="Helical" evidence="3">
    <location>
        <begin position="171"/>
        <end position="191"/>
    </location>
</feature>
<feature type="topological domain" description="Extracellular" evidence="3">
    <location>
        <begin position="192"/>
        <end position="197"/>
    </location>
</feature>
<feature type="transmembrane region" description="Helical" evidence="3">
    <location>
        <begin position="198"/>
        <end position="218"/>
    </location>
</feature>
<feature type="topological domain" description="Cytoplasmic" evidence="3">
    <location>
        <begin position="219"/>
        <end position="260"/>
    </location>
</feature>
<feature type="transmembrane region" description="Helical" evidence="3">
    <location>
        <begin position="261"/>
        <end position="281"/>
    </location>
</feature>
<feature type="topological domain" description="Extracellular" evidence="3">
    <location>
        <begin position="282"/>
        <end position="301"/>
    </location>
</feature>
<feature type="transmembrane region" description="Helical" evidence="3">
    <location>
        <begin position="302"/>
        <end position="322"/>
    </location>
</feature>
<feature type="topological domain" description="Cytoplasmic" evidence="3">
    <location>
        <begin position="323"/>
        <end position="324"/>
    </location>
</feature>
<feature type="transmembrane region" description="Helical" evidence="3">
    <location>
        <begin position="325"/>
        <end position="345"/>
    </location>
</feature>
<feature type="topological domain" description="Extracellular" evidence="3">
    <location>
        <begin position="346"/>
        <end position="347"/>
    </location>
</feature>
<feature type="transmembrane region" description="Helical" evidence="3">
    <location>
        <begin position="348"/>
        <end position="368"/>
    </location>
</feature>
<feature type="topological domain" description="Cytoplasmic" evidence="3">
    <location>
        <begin position="369"/>
        <end position="381"/>
    </location>
</feature>
<feature type="transmembrane region" description="Helical" evidence="3">
    <location>
        <begin position="382"/>
        <end position="402"/>
    </location>
</feature>
<feature type="topological domain" description="Extracellular" evidence="3">
    <location>
        <begin position="403"/>
        <end position="415"/>
    </location>
</feature>
<feature type="transmembrane region" description="Helical" evidence="3">
    <location>
        <begin position="416"/>
        <end position="436"/>
    </location>
</feature>
<feature type="topological domain" description="Cytoplasmic" evidence="3">
    <location>
        <begin position="437"/>
        <end position="461"/>
    </location>
</feature>
<feature type="short sequence motif" description="Tyrosine-based lysosomal-sorting motif" evidence="1">
    <location>
        <begin position="446"/>
        <end position="449"/>
    </location>
</feature>
<feature type="glycosylation site" description="N-linked (GlcNAc...) asparagine" evidence="3">
    <location>
        <position position="38"/>
    </location>
</feature>
<feature type="glycosylation site" description="N-linked (GlcNAc...) asparagine" evidence="3">
    <location>
        <position position="46"/>
    </location>
</feature>
<feature type="glycosylation site" description="N-linked (GlcNAc...) asparagine" evidence="3">
    <location>
        <position position="53"/>
    </location>
</feature>
<organism>
    <name type="scientific">Rattus norvegicus</name>
    <name type="common">Rat</name>
    <dbReference type="NCBI Taxonomy" id="10116"/>
    <lineage>
        <taxon>Eukaryota</taxon>
        <taxon>Metazoa</taxon>
        <taxon>Chordata</taxon>
        <taxon>Craniata</taxon>
        <taxon>Vertebrata</taxon>
        <taxon>Euteleostomi</taxon>
        <taxon>Mammalia</taxon>
        <taxon>Eutheria</taxon>
        <taxon>Euarchontoglires</taxon>
        <taxon>Glires</taxon>
        <taxon>Rodentia</taxon>
        <taxon>Myomorpha</taxon>
        <taxon>Muroidea</taxon>
        <taxon>Muridae</taxon>
        <taxon>Murinae</taxon>
        <taxon>Rattus</taxon>
    </lineage>
</organism>
<protein>
    <recommendedName>
        <fullName>Lysosomal proton-coupled steroid conjugate and bile acid symporter SLC46A3</fullName>
    </recommendedName>
    <alternativeName>
        <fullName>Solute carrier family 46 member 3</fullName>
    </alternativeName>
</protein>
<dbReference type="EMBL" id="BC091179">
    <property type="protein sequence ID" value="AAH91179.1"/>
    <property type="molecule type" value="mRNA"/>
</dbReference>
<dbReference type="RefSeq" id="NP_001020139.1">
    <property type="nucleotide sequence ID" value="NM_001024968.1"/>
</dbReference>
<dbReference type="RefSeq" id="XP_006248895.1">
    <property type="nucleotide sequence ID" value="XM_006248833.5"/>
</dbReference>
<dbReference type="SMR" id="Q5BK75"/>
<dbReference type="FunCoup" id="Q5BK75">
    <property type="interactions" value="150"/>
</dbReference>
<dbReference type="GlyCosmos" id="Q5BK75">
    <property type="glycosylation" value="3 sites, No reported glycans"/>
</dbReference>
<dbReference type="GlyGen" id="Q5BK75">
    <property type="glycosylation" value="3 sites"/>
</dbReference>
<dbReference type="PhosphoSitePlus" id="Q5BK75"/>
<dbReference type="PaxDb" id="10116-ENSRNOP00000001243"/>
<dbReference type="Ensembl" id="ENSRNOT00000001243.7">
    <property type="protein sequence ID" value="ENSRNOP00000001243.4"/>
    <property type="gene ID" value="ENSRNOG00000000937.7"/>
</dbReference>
<dbReference type="GeneID" id="288454"/>
<dbReference type="KEGG" id="rno:288454"/>
<dbReference type="UCSC" id="RGD:1307594">
    <property type="organism name" value="rat"/>
</dbReference>
<dbReference type="AGR" id="RGD:1307594"/>
<dbReference type="CTD" id="283537"/>
<dbReference type="RGD" id="1307594">
    <property type="gene designation" value="Slc46a3"/>
</dbReference>
<dbReference type="eggNOG" id="KOG2816">
    <property type="taxonomic scope" value="Eukaryota"/>
</dbReference>
<dbReference type="GeneTree" id="ENSGT00950000183096"/>
<dbReference type="HOGENOM" id="CLU_028365_1_1_1"/>
<dbReference type="InParanoid" id="Q5BK75"/>
<dbReference type="OMA" id="DNTSRCA"/>
<dbReference type="OrthoDB" id="3026777at2759"/>
<dbReference type="PhylomeDB" id="Q5BK75"/>
<dbReference type="TreeFam" id="TF315701"/>
<dbReference type="PRO" id="PR:Q5BK75"/>
<dbReference type="Proteomes" id="UP000002494">
    <property type="component" value="Chromosome 12"/>
</dbReference>
<dbReference type="Bgee" id="ENSRNOG00000000937">
    <property type="expression patterns" value="Expressed in liver and 19 other cell types or tissues"/>
</dbReference>
<dbReference type="GO" id="GO:0005765">
    <property type="term" value="C:lysosomal membrane"/>
    <property type="evidence" value="ECO:0000266"/>
    <property type="project" value="RGD"/>
</dbReference>
<dbReference type="GO" id="GO:0005375">
    <property type="term" value="F:copper ion transmembrane transporter activity"/>
    <property type="evidence" value="ECO:0000266"/>
    <property type="project" value="RGD"/>
</dbReference>
<dbReference type="GO" id="GO:0015293">
    <property type="term" value="F:symporter activity"/>
    <property type="evidence" value="ECO:0007669"/>
    <property type="project" value="UniProtKB-KW"/>
</dbReference>
<dbReference type="GO" id="GO:0022857">
    <property type="term" value="F:transmembrane transporter activity"/>
    <property type="evidence" value="ECO:0000266"/>
    <property type="project" value="RGD"/>
</dbReference>
<dbReference type="GO" id="GO:1904613">
    <property type="term" value="P:cellular response to 2,3,7,8-tetrachlorodibenzodioxine"/>
    <property type="evidence" value="ECO:0000266"/>
    <property type="project" value="RGD"/>
</dbReference>
<dbReference type="GO" id="GO:0034486">
    <property type="term" value="P:vacuolar transmembrane transport"/>
    <property type="evidence" value="ECO:0000266"/>
    <property type="project" value="RGD"/>
</dbReference>
<dbReference type="Gene3D" id="1.20.1250.20">
    <property type="entry name" value="MFS general substrate transporter like domains"/>
    <property type="match status" value="1"/>
</dbReference>
<dbReference type="InterPro" id="IPR011701">
    <property type="entry name" value="MFS"/>
</dbReference>
<dbReference type="InterPro" id="IPR036259">
    <property type="entry name" value="MFS_trans_sf"/>
</dbReference>
<dbReference type="PANTHER" id="PTHR23507:SF9">
    <property type="entry name" value="LYSOSOMAL PROTON-COUPLED STEROID CONJUGATE AND BILE ACID SYMPORTER SLC46A3"/>
    <property type="match status" value="1"/>
</dbReference>
<dbReference type="PANTHER" id="PTHR23507">
    <property type="entry name" value="ZGC:174356"/>
    <property type="match status" value="1"/>
</dbReference>
<dbReference type="Pfam" id="PF07690">
    <property type="entry name" value="MFS_1"/>
    <property type="match status" value="1"/>
</dbReference>
<dbReference type="SUPFAM" id="SSF103473">
    <property type="entry name" value="MFS general substrate transporter"/>
    <property type="match status" value="1"/>
</dbReference>
<comment type="function">
    <text evidence="1 2">Lysosomal proton-coupled steroid conjugate and bile acid transporter. Preferentially recognizes lipophilic steroid conjugates or bile acis as endogenous substrates and seems to mediate escape from lysosomes to the cytoplasm (By similarity). Modulates hepatic cytosolic copper homeostasis, maybe acting as a lysosomal copper transporter and sequestering copper ions in the lysosome (By similarity). Delivers pathogen-associated molecular patterns to cytosolic pattern recognition receptors as part of the innate immune response to microbes. Selectively transports bacterial muramyl dipeptide (MDP) into the cytosol for recognition by NOD2, triggering inflammatory responses (By similarity). Likely acts as a redundant importer of cyclic GMP-AMP dinucleotides (cGAMPs) in monocyte and macrophage cell lineages. The transport mechanism, its electrogenicity and stoichiometry remain to be elucidated (By similarity).</text>
</comment>
<comment type="catalytic activity">
    <reaction evidence="1">
        <text>estrone 3-sulfate(out) + n H(+)(out) = estrone 3-sulfate(in) + n H(+)(in)</text>
        <dbReference type="Rhea" id="RHEA:75483"/>
        <dbReference type="ChEBI" id="CHEBI:15378"/>
        <dbReference type="ChEBI" id="CHEBI:60050"/>
    </reaction>
</comment>
<comment type="catalytic activity">
    <reaction evidence="1">
        <text>25-hydroxyvitamin D3 sulfate(out) + n H(+)(out) = 25-hydroxyvitamin D3 sulfate(in) + n H(+)(in)</text>
        <dbReference type="Rhea" id="RHEA:75491"/>
        <dbReference type="ChEBI" id="CHEBI:15378"/>
        <dbReference type="ChEBI" id="CHEBI:194336"/>
    </reaction>
</comment>
<comment type="catalytic activity">
    <reaction evidence="1">
        <text>cholate(out) + n H(+)(out) = cholate(in) + n H(+)(in)</text>
        <dbReference type="Rhea" id="RHEA:75499"/>
        <dbReference type="ChEBI" id="CHEBI:15378"/>
        <dbReference type="ChEBI" id="CHEBI:29747"/>
    </reaction>
</comment>
<comment type="catalytic activity">
    <reaction evidence="1">
        <text>glycocholate(out) + n H(+)(out) = glycocholate(in) + n H(+)(in)</text>
        <dbReference type="Rhea" id="RHEA:75503"/>
        <dbReference type="ChEBI" id="CHEBI:15378"/>
        <dbReference type="ChEBI" id="CHEBI:29746"/>
    </reaction>
</comment>
<comment type="catalytic activity">
    <reaction evidence="1">
        <text>taurocholate(out) + n H(+)(out) = taurocholate(in) + n H(+)(in)</text>
        <dbReference type="Rhea" id="RHEA:75507"/>
        <dbReference type="ChEBI" id="CHEBI:15378"/>
        <dbReference type="ChEBI" id="CHEBI:36257"/>
    </reaction>
</comment>
<comment type="catalytic activity">
    <reaction evidence="1">
        <text>dehydroepiandrosterone 3-sulfate(out) + n H(+)(out) = dehydroepiandrosterone 3-sulfate(in) + n H(+)(in)</text>
        <dbReference type="Rhea" id="RHEA:75487"/>
        <dbReference type="ChEBI" id="CHEBI:15378"/>
        <dbReference type="ChEBI" id="CHEBI:57905"/>
    </reaction>
</comment>
<comment type="catalytic activity">
    <reaction evidence="2">
        <text>N-acetyl-D-muramoyl-L-alanyl-D-isoglutamine(out) + n H(+)(out) = N-acetyl-D-muramoyl-L-alanyl-D-isoglutamine(in) + n H(+)(in)</text>
        <dbReference type="Rhea" id="RHEA:76371"/>
        <dbReference type="ChEBI" id="CHEBI:15378"/>
        <dbReference type="ChEBI" id="CHEBI:155830"/>
    </reaction>
    <physiologicalReaction direction="left-to-right" evidence="2">
        <dbReference type="Rhea" id="RHEA:76372"/>
    </physiologicalReaction>
</comment>
<comment type="catalytic activity">
    <reaction evidence="1">
        <text>2',3'-cGAMP(out) + n H(+)(out) = 2',3'-cGAMP(in) + n H(+)(in)</text>
        <dbReference type="Rhea" id="RHEA:76411"/>
        <dbReference type="ChEBI" id="CHEBI:15378"/>
        <dbReference type="ChEBI" id="CHEBI:143093"/>
    </reaction>
    <physiologicalReaction direction="left-to-right" evidence="1">
        <dbReference type="Rhea" id="RHEA:76412"/>
    </physiologicalReaction>
</comment>
<comment type="subcellular location">
    <subcellularLocation>
        <location evidence="1">Lysosome membrane</location>
        <topology evidence="3">Multi-pass membrane protein</topology>
    </subcellularLocation>
</comment>
<comment type="similarity">
    <text evidence="4">Belongs to the major facilitator superfamily. SLC46A family.</text>
</comment>
<accession>Q5BK75</accession>
<reference key="1">
    <citation type="journal article" date="2004" name="Genome Res.">
        <title>The status, quality, and expansion of the NIH full-length cDNA project: the Mammalian Gene Collection (MGC).</title>
        <authorList>
            <consortium name="The MGC Project Team"/>
        </authorList>
    </citation>
    <scope>NUCLEOTIDE SEQUENCE [LARGE SCALE MRNA]</scope>
    <source>
        <tissue>Liver</tissue>
    </source>
</reference>